<feature type="chain" id="PRO_1000099400" description="DNA repair protein RecO">
    <location>
        <begin position="1"/>
        <end position="256"/>
    </location>
</feature>
<proteinExistence type="inferred from homology"/>
<keyword id="KW-0227">DNA damage</keyword>
<keyword id="KW-0233">DNA recombination</keyword>
<keyword id="KW-0234">DNA repair</keyword>
<gene>
    <name evidence="1" type="primary">recO</name>
    <name type="ordered locus">RHECIAT_CH0001462</name>
</gene>
<reference key="1">
    <citation type="journal article" date="2010" name="Appl. Environ. Microbiol.">
        <title>Conserved symbiotic plasmid DNA sequences in the multireplicon pangenomic structure of Rhizobium etli.</title>
        <authorList>
            <person name="Gonzalez V."/>
            <person name="Acosta J.L."/>
            <person name="Santamaria R.I."/>
            <person name="Bustos P."/>
            <person name="Fernandez J.L."/>
            <person name="Hernandez Gonzalez I.L."/>
            <person name="Diaz R."/>
            <person name="Flores M."/>
            <person name="Palacios R."/>
            <person name="Mora J."/>
            <person name="Davila G."/>
        </authorList>
    </citation>
    <scope>NUCLEOTIDE SEQUENCE [LARGE SCALE GENOMIC DNA]</scope>
    <source>
        <strain>CIAT 652</strain>
    </source>
</reference>
<name>RECO_RHIE6</name>
<sequence length="256" mass="27784">MQWQDHAIILGIKRHGETSVIAEVMTRDRGRHLGLVRSGRSRAMQPVLQPGNAVEVIWRARLDEHLGEFRVEPVTLRAARLMETATAVYGVQAMGALLRLLPERDPHPHLFDALEVILDHLHNPADAGELFVRFELAVLNDLGFGLDLGECAATGARSDLAYVSPKSGRAVSRSAGAPWADKMLLLPPFLGVEGNHAADFDSLAAAFRLTGFFLHRHVYEPRGMEAAAARDGFVQAALKALNPALRTLAGPNGVSA</sequence>
<organism>
    <name type="scientific">Rhizobium etli (strain CIAT 652)</name>
    <dbReference type="NCBI Taxonomy" id="491916"/>
    <lineage>
        <taxon>Bacteria</taxon>
        <taxon>Pseudomonadati</taxon>
        <taxon>Pseudomonadota</taxon>
        <taxon>Alphaproteobacteria</taxon>
        <taxon>Hyphomicrobiales</taxon>
        <taxon>Rhizobiaceae</taxon>
        <taxon>Rhizobium/Agrobacterium group</taxon>
        <taxon>Rhizobium</taxon>
    </lineage>
</organism>
<comment type="function">
    <text evidence="1">Involved in DNA repair and RecF pathway recombination.</text>
</comment>
<comment type="similarity">
    <text evidence="1">Belongs to the RecO family.</text>
</comment>
<protein>
    <recommendedName>
        <fullName evidence="1">DNA repair protein RecO</fullName>
    </recommendedName>
    <alternativeName>
        <fullName evidence="1">Recombination protein O</fullName>
    </alternativeName>
</protein>
<dbReference type="EMBL" id="CP001074">
    <property type="protein sequence ID" value="ACE90441.1"/>
    <property type="molecule type" value="Genomic_DNA"/>
</dbReference>
<dbReference type="SMR" id="B3PUP2"/>
<dbReference type="KEGG" id="rec:RHECIAT_CH0001462"/>
<dbReference type="eggNOG" id="COG1381">
    <property type="taxonomic scope" value="Bacteria"/>
</dbReference>
<dbReference type="HOGENOM" id="CLU_086029_0_0_5"/>
<dbReference type="Proteomes" id="UP000008817">
    <property type="component" value="Chromosome"/>
</dbReference>
<dbReference type="GO" id="GO:0043590">
    <property type="term" value="C:bacterial nucleoid"/>
    <property type="evidence" value="ECO:0007669"/>
    <property type="project" value="TreeGrafter"/>
</dbReference>
<dbReference type="GO" id="GO:0006310">
    <property type="term" value="P:DNA recombination"/>
    <property type="evidence" value="ECO:0007669"/>
    <property type="project" value="UniProtKB-UniRule"/>
</dbReference>
<dbReference type="GO" id="GO:0006302">
    <property type="term" value="P:double-strand break repair"/>
    <property type="evidence" value="ECO:0007669"/>
    <property type="project" value="TreeGrafter"/>
</dbReference>
<dbReference type="Gene3D" id="2.40.50.140">
    <property type="entry name" value="Nucleic acid-binding proteins"/>
    <property type="match status" value="1"/>
</dbReference>
<dbReference type="Gene3D" id="1.20.1440.120">
    <property type="entry name" value="Recombination protein O, C-terminal domain"/>
    <property type="match status" value="1"/>
</dbReference>
<dbReference type="HAMAP" id="MF_00201">
    <property type="entry name" value="RecO"/>
    <property type="match status" value="1"/>
</dbReference>
<dbReference type="InterPro" id="IPR037278">
    <property type="entry name" value="ARFGAP/RecO"/>
</dbReference>
<dbReference type="InterPro" id="IPR022572">
    <property type="entry name" value="DNA_rep/recomb_RecO_N"/>
</dbReference>
<dbReference type="InterPro" id="IPR012340">
    <property type="entry name" value="NA-bd_OB-fold"/>
</dbReference>
<dbReference type="InterPro" id="IPR003717">
    <property type="entry name" value="RecO"/>
</dbReference>
<dbReference type="InterPro" id="IPR042242">
    <property type="entry name" value="RecO_C"/>
</dbReference>
<dbReference type="NCBIfam" id="TIGR00613">
    <property type="entry name" value="reco"/>
    <property type="match status" value="1"/>
</dbReference>
<dbReference type="PANTHER" id="PTHR33991">
    <property type="entry name" value="DNA REPAIR PROTEIN RECO"/>
    <property type="match status" value="1"/>
</dbReference>
<dbReference type="PANTHER" id="PTHR33991:SF1">
    <property type="entry name" value="DNA REPAIR PROTEIN RECO"/>
    <property type="match status" value="1"/>
</dbReference>
<dbReference type="Pfam" id="PF02565">
    <property type="entry name" value="RecO_C"/>
    <property type="match status" value="1"/>
</dbReference>
<dbReference type="Pfam" id="PF11967">
    <property type="entry name" value="RecO_N"/>
    <property type="match status" value="1"/>
</dbReference>
<dbReference type="SUPFAM" id="SSF57863">
    <property type="entry name" value="ArfGap/RecO-like zinc finger"/>
    <property type="match status" value="1"/>
</dbReference>
<dbReference type="SUPFAM" id="SSF50249">
    <property type="entry name" value="Nucleic acid-binding proteins"/>
    <property type="match status" value="1"/>
</dbReference>
<evidence type="ECO:0000255" key="1">
    <source>
        <dbReference type="HAMAP-Rule" id="MF_00201"/>
    </source>
</evidence>
<accession>B3PUP2</accession>